<proteinExistence type="evidence at protein level"/>
<gene>
    <name type="primary">aroG</name>
    <name type="ordered locus">b0754</name>
    <name type="ordered locus">JW0737</name>
</gene>
<dbReference type="EC" id="2.5.1.54"/>
<dbReference type="EMBL" id="J01591">
    <property type="protein sequence ID" value="AAA23492.1"/>
    <property type="molecule type" value="Genomic_DNA"/>
</dbReference>
<dbReference type="EMBL" id="U00096">
    <property type="protein sequence ID" value="AAC73841.1"/>
    <property type="molecule type" value="Genomic_DNA"/>
</dbReference>
<dbReference type="EMBL" id="AP009048">
    <property type="protein sequence ID" value="BAA35416.1"/>
    <property type="molecule type" value="Genomic_DNA"/>
</dbReference>
<dbReference type="PIR" id="A01106">
    <property type="entry name" value="ADECHF"/>
</dbReference>
<dbReference type="RefSeq" id="NP_415275.1">
    <property type="nucleotide sequence ID" value="NC_000913.3"/>
</dbReference>
<dbReference type="RefSeq" id="WP_001109196.1">
    <property type="nucleotide sequence ID" value="NZ_SSZK01000002.1"/>
</dbReference>
<dbReference type="PDB" id="1GG1">
    <property type="method" value="X-ray"/>
    <property type="resolution" value="2.00 A"/>
    <property type="chains" value="A/B/C/D=1-350"/>
</dbReference>
<dbReference type="PDB" id="1KFL">
    <property type="method" value="X-ray"/>
    <property type="resolution" value="2.80 A"/>
    <property type="chains" value="A/B/C/D/E/F/G/H=2-350"/>
</dbReference>
<dbReference type="PDB" id="1N8F">
    <property type="method" value="X-ray"/>
    <property type="resolution" value="1.75 A"/>
    <property type="chains" value="A/B/C/D=1-350"/>
</dbReference>
<dbReference type="PDB" id="1QR7">
    <property type="method" value="X-ray"/>
    <property type="resolution" value="2.60 A"/>
    <property type="chains" value="A/B/C/D=1-350"/>
</dbReference>
<dbReference type="PDB" id="5CKS">
    <property type="method" value="X-ray"/>
    <property type="resolution" value="2.12 A"/>
    <property type="chains" value="A/B/C/D=1-350"/>
</dbReference>
<dbReference type="PDB" id="7RUD">
    <property type="method" value="X-ray"/>
    <property type="resolution" value="2.80 A"/>
    <property type="chains" value="A/B/C/D=1-350"/>
</dbReference>
<dbReference type="PDB" id="7RUE">
    <property type="method" value="X-ray"/>
    <property type="resolution" value="2.50 A"/>
    <property type="chains" value="A/B/C/D=1-350"/>
</dbReference>
<dbReference type="PDB" id="8E0S">
    <property type="method" value="X-ray"/>
    <property type="resolution" value="1.65 A"/>
    <property type="chains" value="A/B/C/D=1-350"/>
</dbReference>
<dbReference type="PDB" id="8E0T">
    <property type="method" value="X-ray"/>
    <property type="resolution" value="1.94 A"/>
    <property type="chains" value="A/B/C/D=1-350"/>
</dbReference>
<dbReference type="PDB" id="8E0U">
    <property type="method" value="X-ray"/>
    <property type="resolution" value="2.42 A"/>
    <property type="chains" value="A/B/C/D=1-350"/>
</dbReference>
<dbReference type="PDB" id="8E0V">
    <property type="method" value="X-ray"/>
    <property type="resolution" value="2.30 A"/>
    <property type="chains" value="A/B/C/D=1-350"/>
</dbReference>
<dbReference type="PDB" id="8E0X">
    <property type="method" value="X-ray"/>
    <property type="resolution" value="1.97 A"/>
    <property type="chains" value="A/B/C/D=1-350"/>
</dbReference>
<dbReference type="PDB" id="8E0Y">
    <property type="method" value="X-ray"/>
    <property type="resolution" value="2.01 A"/>
    <property type="chains" value="A/B/C/D=1-350"/>
</dbReference>
<dbReference type="PDB" id="8E0Z">
    <property type="method" value="X-ray"/>
    <property type="resolution" value="2.40 A"/>
    <property type="chains" value="A/B/C/D=1-350"/>
</dbReference>
<dbReference type="PDBsum" id="1GG1"/>
<dbReference type="PDBsum" id="1KFL"/>
<dbReference type="PDBsum" id="1N8F"/>
<dbReference type="PDBsum" id="1QR7"/>
<dbReference type="PDBsum" id="5CKS"/>
<dbReference type="PDBsum" id="7RUD"/>
<dbReference type="PDBsum" id="7RUE"/>
<dbReference type="PDBsum" id="8E0S"/>
<dbReference type="PDBsum" id="8E0T"/>
<dbReference type="PDBsum" id="8E0U"/>
<dbReference type="PDBsum" id="8E0V"/>
<dbReference type="PDBsum" id="8E0X"/>
<dbReference type="PDBsum" id="8E0Y"/>
<dbReference type="PDBsum" id="8E0Z"/>
<dbReference type="SMR" id="P0AB91"/>
<dbReference type="BioGRID" id="4261709">
    <property type="interactions" value="20"/>
</dbReference>
<dbReference type="DIP" id="DIP-35898N"/>
<dbReference type="FunCoup" id="P0AB91">
    <property type="interactions" value="489"/>
</dbReference>
<dbReference type="IntAct" id="P0AB91">
    <property type="interactions" value="3"/>
</dbReference>
<dbReference type="STRING" id="511145.b0754"/>
<dbReference type="BindingDB" id="P0AB91"/>
<dbReference type="DrugBank" id="DB02726">
    <property type="generic name" value="2-Phosphoglycolic Acid"/>
</dbReference>
<dbReference type="DrugBank" id="DB01819">
    <property type="generic name" value="Phosphoenolpyruvate"/>
</dbReference>
<dbReference type="iPTMnet" id="P0AB91"/>
<dbReference type="jPOST" id="P0AB91"/>
<dbReference type="PaxDb" id="511145-b0754"/>
<dbReference type="EnsemblBacteria" id="AAC73841">
    <property type="protein sequence ID" value="AAC73841"/>
    <property type="gene ID" value="b0754"/>
</dbReference>
<dbReference type="GeneID" id="75170753"/>
<dbReference type="GeneID" id="945605"/>
<dbReference type="KEGG" id="ecj:JW0737"/>
<dbReference type="KEGG" id="eco:b0754"/>
<dbReference type="KEGG" id="ecoc:C3026_03815"/>
<dbReference type="PATRIC" id="fig|1411691.4.peg.1525"/>
<dbReference type="EchoBASE" id="EB0077"/>
<dbReference type="eggNOG" id="COG0722">
    <property type="taxonomic scope" value="Bacteria"/>
</dbReference>
<dbReference type="HOGENOM" id="CLU_030903_0_1_6"/>
<dbReference type="InParanoid" id="P0AB91"/>
<dbReference type="OMA" id="DINTGLR"/>
<dbReference type="OrthoDB" id="9807331at2"/>
<dbReference type="PhylomeDB" id="P0AB91"/>
<dbReference type="BioCyc" id="EcoCyc:AROG-MONOMER"/>
<dbReference type="BioCyc" id="MetaCyc:AROG-MONOMER"/>
<dbReference type="BRENDA" id="2.5.1.54">
    <property type="organism ID" value="2026"/>
</dbReference>
<dbReference type="SABIO-RK" id="P0AB91"/>
<dbReference type="UniPathway" id="UPA00053">
    <property type="reaction ID" value="UER00084"/>
</dbReference>
<dbReference type="EvolutionaryTrace" id="P0AB91"/>
<dbReference type="PRO" id="PR:P0AB91"/>
<dbReference type="Proteomes" id="UP000000625">
    <property type="component" value="Chromosome"/>
</dbReference>
<dbReference type="GO" id="GO:0005737">
    <property type="term" value="C:cytoplasm"/>
    <property type="evidence" value="ECO:0000318"/>
    <property type="project" value="GO_Central"/>
</dbReference>
<dbReference type="GO" id="GO:0005829">
    <property type="term" value="C:cytosol"/>
    <property type="evidence" value="ECO:0000314"/>
    <property type="project" value="EcoCyc"/>
</dbReference>
<dbReference type="GO" id="GO:0003849">
    <property type="term" value="F:3-deoxy-7-phosphoheptulonate synthase activity"/>
    <property type="evidence" value="ECO:0000314"/>
    <property type="project" value="EcoCyc"/>
</dbReference>
<dbReference type="GO" id="GO:0042802">
    <property type="term" value="F:identical protein binding"/>
    <property type="evidence" value="ECO:0000314"/>
    <property type="project" value="EcoCyc"/>
</dbReference>
<dbReference type="GO" id="GO:0008652">
    <property type="term" value="P:amino acid biosynthetic process"/>
    <property type="evidence" value="ECO:0007669"/>
    <property type="project" value="UniProtKB-KW"/>
</dbReference>
<dbReference type="GO" id="GO:0009073">
    <property type="term" value="P:aromatic amino acid family biosynthetic process"/>
    <property type="evidence" value="ECO:0000318"/>
    <property type="project" value="GO_Central"/>
</dbReference>
<dbReference type="GO" id="GO:0009423">
    <property type="term" value="P:chorismate biosynthetic process"/>
    <property type="evidence" value="ECO:0007669"/>
    <property type="project" value="UniProtKB-UniPathway"/>
</dbReference>
<dbReference type="FunFam" id="3.20.20.70:FF:000005">
    <property type="entry name" value="Phospho-2-dehydro-3-deoxyheptonate aldolase"/>
    <property type="match status" value="1"/>
</dbReference>
<dbReference type="Gene3D" id="3.20.20.70">
    <property type="entry name" value="Aldolase class I"/>
    <property type="match status" value="1"/>
</dbReference>
<dbReference type="InterPro" id="IPR013785">
    <property type="entry name" value="Aldolase_TIM"/>
</dbReference>
<dbReference type="InterPro" id="IPR006218">
    <property type="entry name" value="DAHP1/KDSA"/>
</dbReference>
<dbReference type="InterPro" id="IPR006219">
    <property type="entry name" value="DAHP_synth_1"/>
</dbReference>
<dbReference type="NCBIfam" id="TIGR00034">
    <property type="entry name" value="aroFGH"/>
    <property type="match status" value="1"/>
</dbReference>
<dbReference type="NCBIfam" id="NF006723">
    <property type="entry name" value="PRK09261.1-1"/>
    <property type="match status" value="1"/>
</dbReference>
<dbReference type="NCBIfam" id="NF009395">
    <property type="entry name" value="PRK12755.1"/>
    <property type="match status" value="1"/>
</dbReference>
<dbReference type="NCBIfam" id="NF009396">
    <property type="entry name" value="PRK12756.1"/>
    <property type="match status" value="1"/>
</dbReference>
<dbReference type="PANTHER" id="PTHR21225">
    <property type="entry name" value="PHOSPHO-2-DEHYDRO-3-DEOXYHEPTONATE ALDOLASE DAHP SYNTHETASE"/>
    <property type="match status" value="1"/>
</dbReference>
<dbReference type="PANTHER" id="PTHR21225:SF12">
    <property type="entry name" value="PHOSPHO-2-DEHYDRO-3-DEOXYHEPTONATE ALDOLASE, TYROSINE-INHIBITED"/>
    <property type="match status" value="1"/>
</dbReference>
<dbReference type="Pfam" id="PF00793">
    <property type="entry name" value="DAHP_synth_1"/>
    <property type="match status" value="1"/>
</dbReference>
<dbReference type="PIRSF" id="PIRSF001361">
    <property type="entry name" value="DAHP_synthase"/>
    <property type="match status" value="1"/>
</dbReference>
<dbReference type="SUPFAM" id="SSF51569">
    <property type="entry name" value="Aldolase"/>
    <property type="match status" value="1"/>
</dbReference>
<comment type="function">
    <text>Stereospecific condensation of phosphoenolpyruvate (PEP) and D-erythrose-4-phosphate (E4P) giving rise to 3-deoxy-D-arabino-heptulosonate-7-phosphate (DAHP).</text>
</comment>
<comment type="catalytic activity">
    <reaction>
        <text>D-erythrose 4-phosphate + phosphoenolpyruvate + H2O = 7-phospho-2-dehydro-3-deoxy-D-arabino-heptonate + phosphate</text>
        <dbReference type="Rhea" id="RHEA:14717"/>
        <dbReference type="ChEBI" id="CHEBI:15377"/>
        <dbReference type="ChEBI" id="CHEBI:16897"/>
        <dbReference type="ChEBI" id="CHEBI:43474"/>
        <dbReference type="ChEBI" id="CHEBI:58394"/>
        <dbReference type="ChEBI" id="CHEBI:58702"/>
        <dbReference type="EC" id="2.5.1.54"/>
    </reaction>
</comment>
<comment type="pathway">
    <text>Metabolic intermediate biosynthesis; chorismate biosynthesis; chorismate from D-erythrose 4-phosphate and phosphoenolpyruvate: step 1/7.</text>
</comment>
<comment type="subunit">
    <text>Homotetramer.</text>
</comment>
<comment type="interaction">
    <interactant intactId="EBI-1120055">
        <id>P0AB91</id>
    </interactant>
    <interactant intactId="EBI-1120055">
        <id>P0AB91</id>
        <label>aroG</label>
    </interactant>
    <organismsDiffer>false</organismsDiffer>
    <experiments>5</experiments>
</comment>
<comment type="miscellaneous">
    <text>There are 3 DAHP synthases, AroG is feedback-inhibited by Phe. The other 2 DAHP synthases are Tyr- and Trp-sensitive, respectively.</text>
</comment>
<comment type="similarity">
    <text evidence="2">Belongs to the class-I DAHP synthase family.</text>
</comment>
<protein>
    <recommendedName>
        <fullName>Phospho-2-dehydro-3-deoxyheptonate aldolase, Phe-sensitive</fullName>
        <ecNumber>2.5.1.54</ecNumber>
    </recommendedName>
    <alternativeName>
        <fullName>3-deoxy-D-arabino-heptulosonate 7-phosphate synthase</fullName>
    </alternativeName>
    <alternativeName>
        <fullName>DAHP synthase</fullName>
    </alternativeName>
    <alternativeName>
        <fullName>Phospho-2-keto-3-deoxyheptonate aldolase</fullName>
    </alternativeName>
</protein>
<feature type="chain" id="PRO_0000140835" description="Phospho-2-dehydro-3-deoxyheptonate aldolase, Phe-sensitive">
    <location>
        <begin position="1"/>
        <end position="350"/>
    </location>
</feature>
<feature type="modified residue" description="N6-acetyllysine" evidence="1">
    <location>
        <position position="244"/>
    </location>
</feature>
<feature type="strand" evidence="4">
    <location>
        <begin position="10"/>
        <end position="14"/>
    </location>
</feature>
<feature type="helix" evidence="4">
    <location>
        <begin position="19"/>
        <end position="25"/>
    </location>
</feature>
<feature type="helix" evidence="4">
    <location>
        <begin position="30"/>
        <end position="47"/>
    </location>
</feature>
<feature type="strand" evidence="4">
    <location>
        <begin position="54"/>
        <end position="59"/>
    </location>
</feature>
<feature type="helix" evidence="4">
    <location>
        <begin position="66"/>
        <end position="82"/>
    </location>
</feature>
<feature type="turn" evidence="4">
    <location>
        <begin position="83"/>
        <end position="86"/>
    </location>
</feature>
<feature type="strand" evidence="4">
    <location>
        <begin position="87"/>
        <end position="92"/>
    </location>
</feature>
<feature type="strand" evidence="4">
    <location>
        <begin position="100"/>
        <end position="102"/>
    </location>
</feature>
<feature type="turn" evidence="4">
    <location>
        <begin position="107"/>
        <end position="109"/>
    </location>
</feature>
<feature type="strand" evidence="4">
    <location>
        <begin position="113"/>
        <end position="115"/>
    </location>
</feature>
<feature type="helix" evidence="4">
    <location>
        <begin position="119"/>
        <end position="135"/>
    </location>
</feature>
<feature type="strand" evidence="4">
    <location>
        <begin position="140"/>
        <end position="144"/>
    </location>
</feature>
<feature type="strand" evidence="4">
    <location>
        <begin position="146"/>
        <end position="148"/>
    </location>
</feature>
<feature type="helix" evidence="4">
    <location>
        <begin position="150"/>
        <end position="153"/>
    </location>
</feature>
<feature type="helix" evidence="4">
    <location>
        <begin position="154"/>
        <end position="156"/>
    </location>
</feature>
<feature type="strand" evidence="4">
    <location>
        <begin position="158"/>
        <end position="162"/>
    </location>
</feature>
<feature type="helix" evidence="4">
    <location>
        <begin position="164"/>
        <end position="166"/>
    </location>
</feature>
<feature type="helix" evidence="4">
    <location>
        <begin position="170"/>
        <end position="177"/>
    </location>
</feature>
<feature type="strand" evidence="4">
    <location>
        <begin position="183"/>
        <end position="186"/>
    </location>
</feature>
<feature type="helix" evidence="4">
    <location>
        <begin position="194"/>
        <end position="204"/>
    </location>
</feature>
<feature type="strand" evidence="4">
    <location>
        <begin position="208"/>
        <end position="212"/>
    </location>
</feature>
<feature type="strand" evidence="4">
    <location>
        <begin position="216"/>
        <end position="223"/>
    </location>
</feature>
<feature type="strand" evidence="4">
    <location>
        <begin position="229"/>
        <end position="233"/>
    </location>
</feature>
<feature type="strand" evidence="4">
    <location>
        <begin position="236"/>
        <end position="238"/>
    </location>
</feature>
<feature type="helix" evidence="4">
    <location>
        <begin position="243"/>
        <end position="255"/>
    </location>
</feature>
<feature type="strand" evidence="4">
    <location>
        <begin position="262"/>
        <end position="265"/>
    </location>
</feature>
<feature type="helix" evidence="4">
    <location>
        <begin position="268"/>
        <end position="271"/>
    </location>
</feature>
<feature type="helix" evidence="4">
    <location>
        <begin position="275"/>
        <end position="277"/>
    </location>
</feature>
<feature type="helix" evidence="4">
    <location>
        <begin position="278"/>
        <end position="290"/>
    </location>
</feature>
<feature type="strand" evidence="4">
    <location>
        <begin position="295"/>
        <end position="303"/>
    </location>
</feature>
<feature type="strand" evidence="4">
    <location>
        <begin position="305"/>
        <end position="308"/>
    </location>
</feature>
<feature type="strand" evidence="3">
    <location>
        <begin position="312"/>
        <end position="314"/>
    </location>
</feature>
<feature type="strand" evidence="4">
    <location>
        <begin position="324"/>
        <end position="326"/>
    </location>
</feature>
<feature type="helix" evidence="4">
    <location>
        <begin position="331"/>
        <end position="349"/>
    </location>
</feature>
<evidence type="ECO:0000269" key="1">
    <source>
    </source>
</evidence>
<evidence type="ECO:0000305" key="2"/>
<evidence type="ECO:0007829" key="3">
    <source>
        <dbReference type="PDB" id="1N8F"/>
    </source>
</evidence>
<evidence type="ECO:0007829" key="4">
    <source>
        <dbReference type="PDB" id="8E0S"/>
    </source>
</evidence>
<keyword id="KW-0002">3D-structure</keyword>
<keyword id="KW-0007">Acetylation</keyword>
<keyword id="KW-0028">Amino-acid biosynthesis</keyword>
<keyword id="KW-0057">Aromatic amino acid biosynthesis</keyword>
<keyword id="KW-0903">Direct protein sequencing</keyword>
<keyword id="KW-1185">Reference proteome</keyword>
<keyword id="KW-0808">Transferase</keyword>
<name>AROG_ECOLI</name>
<sequence length="350" mass="38010">MNYQNDDLRIKEIKELLPPVALLEKFPATENAANTVAHARKAIHKILKGNDDRLLVVIGPCSIHDPVAAKEYATRLLALREELKDELEIVMRVYFEKPRTTVGWKGLINDPHMDNSFQINDGLRIARKLLLDINDSGLPAAGEFLDMITPQYLADLMSWGAIGARTTESQVHRELASGLSCPVGFKNGTDGTIKVAIDAINAAGAPHCFLSVTKWGHSAIVNTSGNGDCHIILRGGKEPNYSAKHVAEVKEGLNKAGLPAQVMIDFSHANSSKQFKKQMDVCADVCQQIAGGEKAIIGVMVESHLVEGNQSLESGEPLAYGKSITDACIGWEDTDALLRQLANAVKARRG</sequence>
<accession>P0AB91</accession>
<accession>P00886</accession>
<reference key="1">
    <citation type="journal article" date="1982" name="Nucleic Acids Res.">
        <title>The nucleotide sequence of aroG, the gene for 3-deoxy-D-arabinoheptulosonate-7-phosphate synthetase (phe) in Escherichia coli K12.</title>
        <authorList>
            <person name="Davies W.D."/>
            <person name="Davidson B.E."/>
        </authorList>
    </citation>
    <scope>NUCLEOTIDE SEQUENCE [GENOMIC DNA]</scope>
    <source>
        <strain>K12</strain>
    </source>
</reference>
<reference key="2">
    <citation type="journal article" date="1996" name="DNA Res.">
        <title>A 718-kb DNA sequence of the Escherichia coli K-12 genome corresponding to the 12.7-28.0 min region on the linkage map.</title>
        <authorList>
            <person name="Oshima T."/>
            <person name="Aiba H."/>
            <person name="Baba T."/>
            <person name="Fujita K."/>
            <person name="Hayashi K."/>
            <person name="Honjo A."/>
            <person name="Ikemoto K."/>
            <person name="Inada T."/>
            <person name="Itoh T."/>
            <person name="Kajihara M."/>
            <person name="Kanai K."/>
            <person name="Kashimoto K."/>
            <person name="Kimura S."/>
            <person name="Kitagawa M."/>
            <person name="Makino K."/>
            <person name="Masuda S."/>
            <person name="Miki T."/>
            <person name="Mizobuchi K."/>
            <person name="Mori H."/>
            <person name="Motomura K."/>
            <person name="Nakamura Y."/>
            <person name="Nashimoto H."/>
            <person name="Nishio Y."/>
            <person name="Saito N."/>
            <person name="Sampei G."/>
            <person name="Seki Y."/>
            <person name="Tagami H."/>
            <person name="Takemoto K."/>
            <person name="Wada C."/>
            <person name="Yamamoto Y."/>
            <person name="Yano M."/>
            <person name="Horiuchi T."/>
        </authorList>
    </citation>
    <scope>NUCLEOTIDE SEQUENCE [LARGE SCALE GENOMIC DNA]</scope>
    <source>
        <strain>K12 / W3110 / ATCC 27325 / DSM 5911</strain>
    </source>
</reference>
<reference key="3">
    <citation type="journal article" date="1997" name="Science">
        <title>The complete genome sequence of Escherichia coli K-12.</title>
        <authorList>
            <person name="Blattner F.R."/>
            <person name="Plunkett G. III"/>
            <person name="Bloch C.A."/>
            <person name="Perna N.T."/>
            <person name="Burland V."/>
            <person name="Riley M."/>
            <person name="Collado-Vides J."/>
            <person name="Glasner J.D."/>
            <person name="Rode C.K."/>
            <person name="Mayhew G.F."/>
            <person name="Gregor J."/>
            <person name="Davis N.W."/>
            <person name="Kirkpatrick H.A."/>
            <person name="Goeden M.A."/>
            <person name="Rose D.J."/>
            <person name="Mau B."/>
            <person name="Shao Y."/>
        </authorList>
    </citation>
    <scope>NUCLEOTIDE SEQUENCE [LARGE SCALE GENOMIC DNA]</scope>
    <source>
        <strain>K12 / MG1655 / ATCC 47076</strain>
    </source>
</reference>
<reference key="4">
    <citation type="journal article" date="2006" name="Mol. Syst. Biol.">
        <title>Highly accurate genome sequences of Escherichia coli K-12 strains MG1655 and W3110.</title>
        <authorList>
            <person name="Hayashi K."/>
            <person name="Morooka N."/>
            <person name="Yamamoto Y."/>
            <person name="Fujita K."/>
            <person name="Isono K."/>
            <person name="Choi S."/>
            <person name="Ohtsubo E."/>
            <person name="Baba T."/>
            <person name="Wanner B.L."/>
            <person name="Mori H."/>
            <person name="Horiuchi T."/>
        </authorList>
    </citation>
    <scope>NUCLEOTIDE SEQUENCE [LARGE SCALE GENOMIC DNA]</scope>
    <source>
        <strain>K12 / W3110 / ATCC 27325 / DSM 5911</strain>
    </source>
</reference>
<reference key="5">
    <citation type="journal article" date="1997" name="Electrophoresis">
        <title>Comparing the predicted and observed properties of proteins encoded in the genome of Escherichia coli K-12.</title>
        <authorList>
            <person name="Link A.J."/>
            <person name="Robison K."/>
            <person name="Church G.M."/>
        </authorList>
    </citation>
    <scope>PROTEIN SEQUENCE OF 1-12</scope>
    <source>
        <strain>K12 / EMG2</strain>
    </source>
</reference>
<reference key="6">
    <citation type="journal article" date="2009" name="Mol. Cell. Proteomics">
        <title>Lysine acetylation is a highly abundant and evolutionarily conserved modification in Escherichia coli.</title>
        <authorList>
            <person name="Zhang J."/>
            <person name="Sprung R."/>
            <person name="Pei J."/>
            <person name="Tan X."/>
            <person name="Kim S."/>
            <person name="Zhu H."/>
            <person name="Liu C.F."/>
            <person name="Grishin N.V."/>
            <person name="Zhao Y."/>
        </authorList>
    </citation>
    <scope>ACETYLATION [LARGE SCALE ANALYSIS] AT LYS-244</scope>
    <scope>IDENTIFICATION BY MASS SPECTROMETRY</scope>
    <source>
        <strain>K12 / JW1106</strain>
        <strain>K12 / MG1655 / ATCC 47076</strain>
    </source>
</reference>
<reference key="7">
    <citation type="journal article" date="1999" name="Structure">
        <title>Crystal structure of phenylalanine-regulated 3-deoxy-D-arabino-heptulosonate-7-phosphate synthase from Escherichia coli.</title>
        <authorList>
            <person name="Shumilin I.A."/>
            <person name="Kretsinger R.H."/>
            <person name="Bauerle R.H."/>
        </authorList>
    </citation>
    <scope>X-RAY CRYSTALLOGRAPHY (2.6 ANGSTROMS)</scope>
</reference>
<organism>
    <name type="scientific">Escherichia coli (strain K12)</name>
    <dbReference type="NCBI Taxonomy" id="83333"/>
    <lineage>
        <taxon>Bacteria</taxon>
        <taxon>Pseudomonadati</taxon>
        <taxon>Pseudomonadota</taxon>
        <taxon>Gammaproteobacteria</taxon>
        <taxon>Enterobacterales</taxon>
        <taxon>Enterobacteriaceae</taxon>
        <taxon>Escherichia</taxon>
    </lineage>
</organism>